<reference key="1">
    <citation type="journal article" date="2005" name="Nature">
        <title>The map-based sequence of the rice genome.</title>
        <authorList>
            <consortium name="International rice genome sequencing project (IRGSP)"/>
        </authorList>
    </citation>
    <scope>NUCLEOTIDE SEQUENCE [LARGE SCALE GENOMIC DNA]</scope>
    <source>
        <strain>cv. Nipponbare</strain>
    </source>
</reference>
<reference key="2">
    <citation type="journal article" date="2008" name="Nucleic Acids Res.">
        <title>The rice annotation project database (RAP-DB): 2008 update.</title>
        <authorList>
            <consortium name="The rice annotation project (RAP)"/>
        </authorList>
    </citation>
    <scope>GENOME REANNOTATION</scope>
    <source>
        <strain>cv. Nipponbare</strain>
    </source>
</reference>
<reference key="3">
    <citation type="journal article" date="2013" name="Rice">
        <title>Improvement of the Oryza sativa Nipponbare reference genome using next generation sequence and optical map data.</title>
        <authorList>
            <person name="Kawahara Y."/>
            <person name="de la Bastide M."/>
            <person name="Hamilton J.P."/>
            <person name="Kanamori H."/>
            <person name="McCombie W.R."/>
            <person name="Ouyang S."/>
            <person name="Schwartz D.C."/>
            <person name="Tanaka T."/>
            <person name="Wu J."/>
            <person name="Zhou S."/>
            <person name="Childs K.L."/>
            <person name="Davidson R.M."/>
            <person name="Lin H."/>
            <person name="Quesada-Ocampo L."/>
            <person name="Vaillancourt B."/>
            <person name="Sakai H."/>
            <person name="Lee S.S."/>
            <person name="Kim J."/>
            <person name="Numa H."/>
            <person name="Itoh T."/>
            <person name="Buell C.R."/>
            <person name="Matsumoto T."/>
        </authorList>
    </citation>
    <scope>GENOME REANNOTATION</scope>
    <source>
        <strain>cv. Nipponbare</strain>
    </source>
</reference>
<reference key="4">
    <citation type="journal article" date="2005" name="PLoS Biol.">
        <title>The genomes of Oryza sativa: a history of duplications.</title>
        <authorList>
            <person name="Yu J."/>
            <person name="Wang J."/>
            <person name="Lin W."/>
            <person name="Li S."/>
            <person name="Li H."/>
            <person name="Zhou J."/>
            <person name="Ni P."/>
            <person name="Dong W."/>
            <person name="Hu S."/>
            <person name="Zeng C."/>
            <person name="Zhang J."/>
            <person name="Zhang Y."/>
            <person name="Li R."/>
            <person name="Xu Z."/>
            <person name="Li S."/>
            <person name="Li X."/>
            <person name="Zheng H."/>
            <person name="Cong L."/>
            <person name="Lin L."/>
            <person name="Yin J."/>
            <person name="Geng J."/>
            <person name="Li G."/>
            <person name="Shi J."/>
            <person name="Liu J."/>
            <person name="Lv H."/>
            <person name="Li J."/>
            <person name="Wang J."/>
            <person name="Deng Y."/>
            <person name="Ran L."/>
            <person name="Shi X."/>
            <person name="Wang X."/>
            <person name="Wu Q."/>
            <person name="Li C."/>
            <person name="Ren X."/>
            <person name="Wang J."/>
            <person name="Wang X."/>
            <person name="Li D."/>
            <person name="Liu D."/>
            <person name="Zhang X."/>
            <person name="Ji Z."/>
            <person name="Zhao W."/>
            <person name="Sun Y."/>
            <person name="Zhang Z."/>
            <person name="Bao J."/>
            <person name="Han Y."/>
            <person name="Dong L."/>
            <person name="Ji J."/>
            <person name="Chen P."/>
            <person name="Wu S."/>
            <person name="Liu J."/>
            <person name="Xiao Y."/>
            <person name="Bu D."/>
            <person name="Tan J."/>
            <person name="Yang L."/>
            <person name="Ye C."/>
            <person name="Zhang J."/>
            <person name="Xu J."/>
            <person name="Zhou Y."/>
            <person name="Yu Y."/>
            <person name="Zhang B."/>
            <person name="Zhuang S."/>
            <person name="Wei H."/>
            <person name="Liu B."/>
            <person name="Lei M."/>
            <person name="Yu H."/>
            <person name="Li Y."/>
            <person name="Xu H."/>
            <person name="Wei S."/>
            <person name="He X."/>
            <person name="Fang L."/>
            <person name="Zhang Z."/>
            <person name="Zhang Y."/>
            <person name="Huang X."/>
            <person name="Su Z."/>
            <person name="Tong W."/>
            <person name="Li J."/>
            <person name="Tong Z."/>
            <person name="Li S."/>
            <person name="Ye J."/>
            <person name="Wang L."/>
            <person name="Fang L."/>
            <person name="Lei T."/>
            <person name="Chen C.-S."/>
            <person name="Chen H.-C."/>
            <person name="Xu Z."/>
            <person name="Li H."/>
            <person name="Huang H."/>
            <person name="Zhang F."/>
            <person name="Xu H."/>
            <person name="Li N."/>
            <person name="Zhao C."/>
            <person name="Li S."/>
            <person name="Dong L."/>
            <person name="Huang Y."/>
            <person name="Li L."/>
            <person name="Xi Y."/>
            <person name="Qi Q."/>
            <person name="Li W."/>
            <person name="Zhang B."/>
            <person name="Hu W."/>
            <person name="Zhang Y."/>
            <person name="Tian X."/>
            <person name="Jiao Y."/>
            <person name="Liang X."/>
            <person name="Jin J."/>
            <person name="Gao L."/>
            <person name="Zheng W."/>
            <person name="Hao B."/>
            <person name="Liu S.-M."/>
            <person name="Wang W."/>
            <person name="Yuan L."/>
            <person name="Cao M."/>
            <person name="McDermott J."/>
            <person name="Samudrala R."/>
            <person name="Wang J."/>
            <person name="Wong G.K.-S."/>
            <person name="Yang H."/>
        </authorList>
    </citation>
    <scope>NUCLEOTIDE SEQUENCE [LARGE SCALE GENOMIC DNA]</scope>
    <source>
        <strain>cv. Nipponbare</strain>
    </source>
</reference>
<reference key="5">
    <citation type="journal article" date="2003" name="Science">
        <title>Collection, mapping, and annotation of over 28,000 cDNA clones from japonica rice.</title>
        <authorList>
            <consortium name="The rice full-length cDNA consortium"/>
        </authorList>
    </citation>
    <scope>NUCLEOTIDE SEQUENCE [LARGE SCALE MRNA]</scope>
    <source>
        <strain>cv. Nipponbare</strain>
    </source>
</reference>
<reference key="6">
    <citation type="journal article" date="2009" name="J. Genet. Genomics">
        <title>Molecular evolution and functional divergence of HAK potassium transporter gene family in rice (Oryza sativa L.).</title>
        <authorList>
            <person name="Yang Z."/>
            <person name="Gao Q."/>
            <person name="Sun C."/>
            <person name="Li W."/>
            <person name="Gu S."/>
            <person name="Xu C."/>
        </authorList>
    </citation>
    <scope>GENE FAMILY</scope>
</reference>
<evidence type="ECO:0000250" key="1"/>
<evidence type="ECO:0000255" key="2"/>
<evidence type="ECO:0000305" key="3"/>
<comment type="function">
    <text evidence="1">High-affinity potassium transporter.</text>
</comment>
<comment type="subcellular location">
    <subcellularLocation>
        <location evidence="3">Membrane</location>
        <topology evidence="3">Multi-pass membrane protein</topology>
    </subcellularLocation>
</comment>
<comment type="similarity">
    <text evidence="3">Belongs to the HAK/KUP transporter (TC 2.A.72.3) family.</text>
</comment>
<keyword id="KW-0406">Ion transport</keyword>
<keyword id="KW-0472">Membrane</keyword>
<keyword id="KW-0630">Potassium</keyword>
<keyword id="KW-0633">Potassium transport</keyword>
<keyword id="KW-1185">Reference proteome</keyword>
<keyword id="KW-0812">Transmembrane</keyword>
<keyword id="KW-1133">Transmembrane helix</keyword>
<keyword id="KW-0813">Transport</keyword>
<accession>Q84YJ9</accession>
<accession>A0A0P0XHQ0</accession>
<sequence length="739" mass="82596">MEYHHRPHSPPPSDDDVVVIQMNAAAIAAVDEWSSTNEVDDAAAGKGGGLTRRTFSQAYKMKHRTPLEFTWRQVALLSFQSLGVVYGDLGTSPLYVFSSISLDDPGEADFVGILSIILWTFTMICLVKYVFIVLKADDHGEGGTFALYSLLRQHVNFKGNMPVPVTHLASDINLKFHSKKRILTSKLLKFLEQSTKWQAVITYIVLAGTCMVLGDGALTPAISVLSAVQGIQSRSSSITQAHVVLLSVIILFILFFFQKHGTSKVSFTFSPIMILWFTFVAFIGLYNIIKHYPPILKAVSPHYIIIYFIRNKRAAWETLGAIVLCITGAEAMFADLGHFNKSSIQMAFSVIVYPSMILAYAGQAAFLVKNPSKLSTTFYSSTPEPLFWPMFIIATLAAIVASQALISASFSIIRQSIALGCFPRVTMKHTSGKHEGQVYSPEINYFLMVACILITVGFKGGPEIGQAFGVAVIFVMLFTTNLMTVVMLIIWESNIALASLFFVFFFSIEGIYMTSLMNKILQGGWVPFAITAFFLIITLSWTYGRSKKGEYELANVMEREEFIKTVTTRSRVPGVCIFCTDMMNGIPPIVRHYVQHVASLRELMVFVTIRVLPVRTVLPEERFIIDKLEPVGVYRCIVQYGYMDNHNMEGDDYVASVIASLKEIAENDDEILVLDSALINGSTFVLGRTIIKMGTRHNCLKRFFINNLYRFLQKNFRSNMSSLKINPGKTLQVGMLYEI</sequence>
<gene>
    <name type="primary">HAK26</name>
    <name type="ordered locus">Os08g0510300</name>
    <name type="ordered locus">LOC_Os08g39950</name>
    <name type="ORF">OsJ_27891</name>
    <name type="ORF">OSJNBa0016N23.121</name>
</gene>
<protein>
    <recommendedName>
        <fullName>Potassium transporter 26</fullName>
    </recommendedName>
    <alternativeName>
        <fullName>OsHAK26</fullName>
    </alternativeName>
</protein>
<dbReference type="EMBL" id="AP006049">
    <property type="protein sequence ID" value="BAC57399.1"/>
    <property type="molecule type" value="Genomic_DNA"/>
</dbReference>
<dbReference type="EMBL" id="AP008214">
    <property type="protein sequence ID" value="BAF24119.1"/>
    <property type="molecule type" value="Genomic_DNA"/>
</dbReference>
<dbReference type="EMBL" id="AP014964">
    <property type="protein sequence ID" value="BAT06191.1"/>
    <property type="molecule type" value="Genomic_DNA"/>
</dbReference>
<dbReference type="EMBL" id="CM000145">
    <property type="protein sequence ID" value="EAZ43295.1"/>
    <property type="molecule type" value="Genomic_DNA"/>
</dbReference>
<dbReference type="EMBL" id="AK072472">
    <property type="protein sequence ID" value="BAG92986.1"/>
    <property type="molecule type" value="mRNA"/>
</dbReference>
<dbReference type="RefSeq" id="XP_015648207.1">
    <property type="nucleotide sequence ID" value="XM_015792721.1"/>
</dbReference>
<dbReference type="FunCoup" id="Q84YJ9">
    <property type="interactions" value="26"/>
</dbReference>
<dbReference type="STRING" id="39947.Q84YJ9"/>
<dbReference type="PaxDb" id="39947-Q84YJ9"/>
<dbReference type="EnsemblPlants" id="Os08t0510300-01">
    <property type="protein sequence ID" value="Os08t0510300-01"/>
    <property type="gene ID" value="Os08g0510300"/>
</dbReference>
<dbReference type="Gramene" id="Os08t0510300-01">
    <property type="protein sequence ID" value="Os08t0510300-01"/>
    <property type="gene ID" value="Os08g0510300"/>
</dbReference>
<dbReference type="KEGG" id="dosa:Os08g0510300"/>
<dbReference type="eggNOG" id="ENOG502QPSA">
    <property type="taxonomic scope" value="Eukaryota"/>
</dbReference>
<dbReference type="HOGENOM" id="CLU_008142_4_0_1"/>
<dbReference type="InParanoid" id="Q84YJ9"/>
<dbReference type="OMA" id="VNYFLMV"/>
<dbReference type="OrthoDB" id="504708at2759"/>
<dbReference type="Proteomes" id="UP000000763">
    <property type="component" value="Chromosome 8"/>
</dbReference>
<dbReference type="Proteomes" id="UP000007752">
    <property type="component" value="Chromosome 8"/>
</dbReference>
<dbReference type="Proteomes" id="UP000059680">
    <property type="component" value="Chromosome 8"/>
</dbReference>
<dbReference type="GO" id="GO:0016020">
    <property type="term" value="C:membrane"/>
    <property type="evidence" value="ECO:0000318"/>
    <property type="project" value="GO_Central"/>
</dbReference>
<dbReference type="GO" id="GO:0015079">
    <property type="term" value="F:potassium ion transmembrane transporter activity"/>
    <property type="evidence" value="ECO:0000318"/>
    <property type="project" value="GO_Central"/>
</dbReference>
<dbReference type="GO" id="GO:0006813">
    <property type="term" value="P:potassium ion transport"/>
    <property type="evidence" value="ECO:0000318"/>
    <property type="project" value="GO_Central"/>
</dbReference>
<dbReference type="InterPro" id="IPR003855">
    <property type="entry name" value="K+_transporter"/>
</dbReference>
<dbReference type="InterPro" id="IPR053952">
    <property type="entry name" value="K_trans_C"/>
</dbReference>
<dbReference type="InterPro" id="IPR053951">
    <property type="entry name" value="K_trans_N"/>
</dbReference>
<dbReference type="NCBIfam" id="TIGR00794">
    <property type="entry name" value="kup"/>
    <property type="match status" value="1"/>
</dbReference>
<dbReference type="PANTHER" id="PTHR30540">
    <property type="entry name" value="OSMOTIC STRESS POTASSIUM TRANSPORTER"/>
    <property type="match status" value="1"/>
</dbReference>
<dbReference type="PANTHER" id="PTHR30540:SF106">
    <property type="entry name" value="POTASSIUM TRANSPORTER 26"/>
    <property type="match status" value="1"/>
</dbReference>
<dbReference type="Pfam" id="PF02705">
    <property type="entry name" value="K_trans"/>
    <property type="match status" value="1"/>
</dbReference>
<dbReference type="Pfam" id="PF22776">
    <property type="entry name" value="K_trans_C"/>
    <property type="match status" value="1"/>
</dbReference>
<organism>
    <name type="scientific">Oryza sativa subsp. japonica</name>
    <name type="common">Rice</name>
    <dbReference type="NCBI Taxonomy" id="39947"/>
    <lineage>
        <taxon>Eukaryota</taxon>
        <taxon>Viridiplantae</taxon>
        <taxon>Streptophyta</taxon>
        <taxon>Embryophyta</taxon>
        <taxon>Tracheophyta</taxon>
        <taxon>Spermatophyta</taxon>
        <taxon>Magnoliopsida</taxon>
        <taxon>Liliopsida</taxon>
        <taxon>Poales</taxon>
        <taxon>Poaceae</taxon>
        <taxon>BOP clade</taxon>
        <taxon>Oryzoideae</taxon>
        <taxon>Oryzeae</taxon>
        <taxon>Oryzinae</taxon>
        <taxon>Oryza</taxon>
        <taxon>Oryza sativa</taxon>
    </lineage>
</organism>
<proteinExistence type="evidence at transcript level"/>
<feature type="chain" id="PRO_0000379541" description="Potassium transporter 26">
    <location>
        <begin position="1"/>
        <end position="739"/>
    </location>
</feature>
<feature type="topological domain" description="Cytoplasmic" evidence="2">
    <location>
        <begin position="1"/>
        <end position="81"/>
    </location>
</feature>
<feature type="transmembrane region" description="Helical; Name=1" evidence="2">
    <location>
        <begin position="82"/>
        <end position="102"/>
    </location>
</feature>
<feature type="topological domain" description="Extracellular" evidence="2">
    <location>
        <begin position="103"/>
        <end position="112"/>
    </location>
</feature>
<feature type="transmembrane region" description="Helical; Name=2" evidence="2">
    <location>
        <begin position="113"/>
        <end position="133"/>
    </location>
</feature>
<feature type="topological domain" description="Cytoplasmic" evidence="2">
    <location>
        <begin position="134"/>
        <end position="198"/>
    </location>
</feature>
<feature type="transmembrane region" description="Helical; Name=3" evidence="2">
    <location>
        <begin position="199"/>
        <end position="219"/>
    </location>
</feature>
<feature type="topological domain" description="Extracellular" evidence="2">
    <location>
        <begin position="220"/>
        <end position="236"/>
    </location>
</feature>
<feature type="transmembrane region" description="Helical; Name=4" evidence="2">
    <location>
        <begin position="237"/>
        <end position="257"/>
    </location>
</feature>
<feature type="topological domain" description="Cytoplasmic" evidence="2">
    <location>
        <begin position="258"/>
        <end position="268"/>
    </location>
</feature>
<feature type="transmembrane region" description="Helical; Name=5" evidence="2">
    <location>
        <begin position="269"/>
        <end position="289"/>
    </location>
</feature>
<feature type="topological domain" description="Extracellular" evidence="2">
    <location>
        <begin position="290"/>
        <end position="318"/>
    </location>
</feature>
<feature type="transmembrane region" description="Helical; Name=6" evidence="2">
    <location>
        <begin position="319"/>
        <end position="339"/>
    </location>
</feature>
<feature type="topological domain" description="Cytoplasmic" evidence="2">
    <location>
        <begin position="340"/>
        <end position="347"/>
    </location>
</feature>
<feature type="transmembrane region" description="Helical; Name=7" evidence="2">
    <location>
        <begin position="348"/>
        <end position="368"/>
    </location>
</feature>
<feature type="topological domain" description="Extracellular" evidence="2">
    <location>
        <begin position="369"/>
        <end position="385"/>
    </location>
</feature>
<feature type="transmembrane region" description="Helical; Name=8" evidence="2">
    <location>
        <begin position="386"/>
        <end position="406"/>
    </location>
</feature>
<feature type="topological domain" description="Cytoplasmic" evidence="2">
    <location>
        <begin position="407"/>
        <end position="437"/>
    </location>
</feature>
<feature type="transmembrane region" description="Helical; Name=9" evidence="2">
    <location>
        <begin position="438"/>
        <end position="458"/>
    </location>
</feature>
<feature type="topological domain" description="Extracellular" evidence="2">
    <location>
        <begin position="459"/>
        <end position="469"/>
    </location>
</feature>
<feature type="transmembrane region" description="Helical; Name=10" evidence="2">
    <location>
        <begin position="470"/>
        <end position="490"/>
    </location>
</feature>
<feature type="topological domain" description="Cytoplasmic" evidence="2">
    <location>
        <begin position="491"/>
        <end position="494"/>
    </location>
</feature>
<feature type="transmembrane region" description="Helical; Name=11" evidence="2">
    <location>
        <begin position="495"/>
        <end position="515"/>
    </location>
</feature>
<feature type="topological domain" description="Extracellular" evidence="2">
    <location>
        <begin position="516"/>
        <end position="519"/>
    </location>
</feature>
<feature type="transmembrane region" description="Helical; Name=12" evidence="2">
    <location>
        <begin position="520"/>
        <end position="540"/>
    </location>
</feature>
<feature type="topological domain" description="Cytoplasmic" evidence="2">
    <location>
        <begin position="541"/>
        <end position="739"/>
    </location>
</feature>
<name>HAK26_ORYSJ</name>